<name>RPOC_MYCSJ</name>
<keyword id="KW-0240">DNA-directed RNA polymerase</keyword>
<keyword id="KW-0460">Magnesium</keyword>
<keyword id="KW-0479">Metal-binding</keyword>
<keyword id="KW-0548">Nucleotidyltransferase</keyword>
<keyword id="KW-0804">Transcription</keyword>
<keyword id="KW-0808">Transferase</keyword>
<keyword id="KW-0862">Zinc</keyword>
<gene>
    <name evidence="1" type="primary">rpoC</name>
    <name type="ordered locus">Mjls_0998</name>
</gene>
<evidence type="ECO:0000255" key="1">
    <source>
        <dbReference type="HAMAP-Rule" id="MF_01322"/>
    </source>
</evidence>
<feature type="chain" id="PRO_0000308856" description="DNA-directed RNA polymerase subunit beta'">
    <location>
        <begin position="1"/>
        <end position="1315"/>
    </location>
</feature>
<feature type="binding site" evidence="1">
    <location>
        <position position="60"/>
    </location>
    <ligand>
        <name>Zn(2+)</name>
        <dbReference type="ChEBI" id="CHEBI:29105"/>
        <label>1</label>
    </ligand>
</feature>
<feature type="binding site" evidence="1">
    <location>
        <position position="62"/>
    </location>
    <ligand>
        <name>Zn(2+)</name>
        <dbReference type="ChEBI" id="CHEBI:29105"/>
        <label>1</label>
    </ligand>
</feature>
<feature type="binding site" evidence="1">
    <location>
        <position position="75"/>
    </location>
    <ligand>
        <name>Zn(2+)</name>
        <dbReference type="ChEBI" id="CHEBI:29105"/>
        <label>1</label>
    </ligand>
</feature>
<feature type="binding site" evidence="1">
    <location>
        <position position="78"/>
    </location>
    <ligand>
        <name>Zn(2+)</name>
        <dbReference type="ChEBI" id="CHEBI:29105"/>
        <label>1</label>
    </ligand>
</feature>
<feature type="binding site" evidence="1">
    <location>
        <position position="535"/>
    </location>
    <ligand>
        <name>Mg(2+)</name>
        <dbReference type="ChEBI" id="CHEBI:18420"/>
    </ligand>
</feature>
<feature type="binding site" evidence="1">
    <location>
        <position position="537"/>
    </location>
    <ligand>
        <name>Mg(2+)</name>
        <dbReference type="ChEBI" id="CHEBI:18420"/>
    </ligand>
</feature>
<feature type="binding site" evidence="1">
    <location>
        <position position="539"/>
    </location>
    <ligand>
        <name>Mg(2+)</name>
        <dbReference type="ChEBI" id="CHEBI:18420"/>
    </ligand>
</feature>
<feature type="binding site" evidence="1">
    <location>
        <position position="890"/>
    </location>
    <ligand>
        <name>Zn(2+)</name>
        <dbReference type="ChEBI" id="CHEBI:29105"/>
        <label>2</label>
    </ligand>
</feature>
<feature type="binding site" evidence="1">
    <location>
        <position position="967"/>
    </location>
    <ligand>
        <name>Zn(2+)</name>
        <dbReference type="ChEBI" id="CHEBI:29105"/>
        <label>2</label>
    </ligand>
</feature>
<feature type="binding site" evidence="1">
    <location>
        <position position="974"/>
    </location>
    <ligand>
        <name>Zn(2+)</name>
        <dbReference type="ChEBI" id="CHEBI:29105"/>
        <label>2</label>
    </ligand>
</feature>
<feature type="binding site" evidence="1">
    <location>
        <position position="977"/>
    </location>
    <ligand>
        <name>Zn(2+)</name>
        <dbReference type="ChEBI" id="CHEBI:29105"/>
        <label>2</label>
    </ligand>
</feature>
<dbReference type="EC" id="2.7.7.6" evidence="1"/>
<dbReference type="EMBL" id="CP000580">
    <property type="protein sequence ID" value="ABN96806.1"/>
    <property type="molecule type" value="Genomic_DNA"/>
</dbReference>
<dbReference type="SMR" id="A3PV79"/>
<dbReference type="KEGG" id="mjl:Mjls_0998"/>
<dbReference type="HOGENOM" id="CLU_000524_3_1_11"/>
<dbReference type="BioCyc" id="MSP164757:G1G8C-1010-MONOMER"/>
<dbReference type="GO" id="GO:0000428">
    <property type="term" value="C:DNA-directed RNA polymerase complex"/>
    <property type="evidence" value="ECO:0007669"/>
    <property type="project" value="UniProtKB-KW"/>
</dbReference>
<dbReference type="GO" id="GO:0003677">
    <property type="term" value="F:DNA binding"/>
    <property type="evidence" value="ECO:0007669"/>
    <property type="project" value="UniProtKB-UniRule"/>
</dbReference>
<dbReference type="GO" id="GO:0003899">
    <property type="term" value="F:DNA-directed RNA polymerase activity"/>
    <property type="evidence" value="ECO:0007669"/>
    <property type="project" value="UniProtKB-UniRule"/>
</dbReference>
<dbReference type="GO" id="GO:0000287">
    <property type="term" value="F:magnesium ion binding"/>
    <property type="evidence" value="ECO:0007669"/>
    <property type="project" value="UniProtKB-UniRule"/>
</dbReference>
<dbReference type="GO" id="GO:0008270">
    <property type="term" value="F:zinc ion binding"/>
    <property type="evidence" value="ECO:0007669"/>
    <property type="project" value="UniProtKB-UniRule"/>
</dbReference>
<dbReference type="GO" id="GO:0006351">
    <property type="term" value="P:DNA-templated transcription"/>
    <property type="evidence" value="ECO:0007669"/>
    <property type="project" value="UniProtKB-UniRule"/>
</dbReference>
<dbReference type="CDD" id="cd02655">
    <property type="entry name" value="RNAP_beta'_C"/>
    <property type="match status" value="1"/>
</dbReference>
<dbReference type="CDD" id="cd01609">
    <property type="entry name" value="RNAP_beta'_N"/>
    <property type="match status" value="1"/>
</dbReference>
<dbReference type="FunFam" id="1.10.150.390:FF:000002">
    <property type="entry name" value="DNA-directed RNA polymerase subunit beta"/>
    <property type="match status" value="1"/>
</dbReference>
<dbReference type="FunFam" id="1.10.40.90:FF:000001">
    <property type="entry name" value="DNA-directed RNA polymerase subunit beta"/>
    <property type="match status" value="1"/>
</dbReference>
<dbReference type="FunFam" id="4.10.860.120:FF:000001">
    <property type="entry name" value="DNA-directed RNA polymerase subunit beta"/>
    <property type="match status" value="1"/>
</dbReference>
<dbReference type="Gene3D" id="1.10.132.30">
    <property type="match status" value="1"/>
</dbReference>
<dbReference type="Gene3D" id="1.10.150.390">
    <property type="match status" value="1"/>
</dbReference>
<dbReference type="Gene3D" id="1.10.1790.20">
    <property type="match status" value="1"/>
</dbReference>
<dbReference type="Gene3D" id="1.10.40.90">
    <property type="match status" value="1"/>
</dbReference>
<dbReference type="Gene3D" id="2.40.40.20">
    <property type="match status" value="1"/>
</dbReference>
<dbReference type="Gene3D" id="2.40.50.100">
    <property type="match status" value="1"/>
</dbReference>
<dbReference type="Gene3D" id="4.10.860.120">
    <property type="entry name" value="RNA polymerase II, clamp domain"/>
    <property type="match status" value="1"/>
</dbReference>
<dbReference type="Gene3D" id="1.10.274.100">
    <property type="entry name" value="RNA polymerase Rpb1, domain 3"/>
    <property type="match status" value="1"/>
</dbReference>
<dbReference type="HAMAP" id="MF_01322">
    <property type="entry name" value="RNApol_bact_RpoC"/>
    <property type="match status" value="1"/>
</dbReference>
<dbReference type="InterPro" id="IPR045867">
    <property type="entry name" value="DNA-dir_RpoC_beta_prime"/>
</dbReference>
<dbReference type="InterPro" id="IPR012754">
    <property type="entry name" value="DNA-dir_RpoC_beta_prime_bact"/>
</dbReference>
<dbReference type="InterPro" id="IPR000722">
    <property type="entry name" value="RNA_pol_asu"/>
</dbReference>
<dbReference type="InterPro" id="IPR006592">
    <property type="entry name" value="RNA_pol_N"/>
</dbReference>
<dbReference type="InterPro" id="IPR007080">
    <property type="entry name" value="RNA_pol_Rpb1_1"/>
</dbReference>
<dbReference type="InterPro" id="IPR007066">
    <property type="entry name" value="RNA_pol_Rpb1_3"/>
</dbReference>
<dbReference type="InterPro" id="IPR042102">
    <property type="entry name" value="RNA_pol_Rpb1_3_sf"/>
</dbReference>
<dbReference type="InterPro" id="IPR007083">
    <property type="entry name" value="RNA_pol_Rpb1_4"/>
</dbReference>
<dbReference type="InterPro" id="IPR007081">
    <property type="entry name" value="RNA_pol_Rpb1_5"/>
</dbReference>
<dbReference type="InterPro" id="IPR044893">
    <property type="entry name" value="RNA_pol_Rpb1_clamp_domain"/>
</dbReference>
<dbReference type="InterPro" id="IPR038120">
    <property type="entry name" value="Rpb1_funnel_sf"/>
</dbReference>
<dbReference type="NCBIfam" id="NF011498">
    <property type="entry name" value="PRK14906.1"/>
    <property type="match status" value="1"/>
</dbReference>
<dbReference type="NCBIfam" id="TIGR02386">
    <property type="entry name" value="rpoC_TIGR"/>
    <property type="match status" value="1"/>
</dbReference>
<dbReference type="PANTHER" id="PTHR19376">
    <property type="entry name" value="DNA-DIRECTED RNA POLYMERASE"/>
    <property type="match status" value="1"/>
</dbReference>
<dbReference type="PANTHER" id="PTHR19376:SF54">
    <property type="entry name" value="DNA-DIRECTED RNA POLYMERASE SUBUNIT BETA"/>
    <property type="match status" value="1"/>
</dbReference>
<dbReference type="Pfam" id="PF04997">
    <property type="entry name" value="RNA_pol_Rpb1_1"/>
    <property type="match status" value="1"/>
</dbReference>
<dbReference type="Pfam" id="PF00623">
    <property type="entry name" value="RNA_pol_Rpb1_2"/>
    <property type="match status" value="1"/>
</dbReference>
<dbReference type="Pfam" id="PF04983">
    <property type="entry name" value="RNA_pol_Rpb1_3"/>
    <property type="match status" value="1"/>
</dbReference>
<dbReference type="Pfam" id="PF05000">
    <property type="entry name" value="RNA_pol_Rpb1_4"/>
    <property type="match status" value="1"/>
</dbReference>
<dbReference type="Pfam" id="PF04998">
    <property type="entry name" value="RNA_pol_Rpb1_5"/>
    <property type="match status" value="1"/>
</dbReference>
<dbReference type="SMART" id="SM00663">
    <property type="entry name" value="RPOLA_N"/>
    <property type="match status" value="1"/>
</dbReference>
<dbReference type="SUPFAM" id="SSF64484">
    <property type="entry name" value="beta and beta-prime subunits of DNA dependent RNA-polymerase"/>
    <property type="match status" value="1"/>
</dbReference>
<protein>
    <recommendedName>
        <fullName evidence="1">DNA-directed RNA polymerase subunit beta'</fullName>
        <shortName evidence="1">RNAP subunit beta'</shortName>
        <ecNumber evidence="1">2.7.7.6</ecNumber>
    </recommendedName>
    <alternativeName>
        <fullName evidence="1">RNA polymerase subunit beta'</fullName>
    </alternativeName>
    <alternativeName>
        <fullName evidence="1">Transcriptase subunit beta'</fullName>
    </alternativeName>
</protein>
<sequence>MLDVNFFDELRIGLATADDIRQWSYGEVKKPETINYRTLKPEKDGLFCEKIFGPTRDWECYCGKYKRVRFKGIICERCGVEVTRAKVRRERMGHIELAAPVTHIWYFKGVPSRLGYLLDLAPKDLEKIIYFAAYVITDVNDEMRHNELSTLEAEMVVEKKAVEDQRDADLEARAQKLEADLAELEAEGAKSDVRRKVRDGGEREMRQLRDRAQRELDRLDEIWTTFTKLAPKQLIVDEVLYRELVDRYGEYFTGAMGAESIKKLIENFDIEAEAENLRETIRSGKGQKKLRALKRLKVVAAFQTNRNSPMGMVLDAVPVIPPELRPMVQLDGGRFATSDLNDLYRRVINRNNRLKRLIDLGAPEIIVNNEKRMLQESVDALFDNGRRGRPVTGPGNRPLKSLSDLLKGKQGRFRQNLLGKRVDYSGRSVIVVGPQLKLHQCGLPKLMALELFKPFVMKRLVDLNHAQNIKSAKRMVERQRPQVWDVLEEVIAEHPVLLNRAPTLHRLGIQAFEPQLVEGKAIQLHPLVCEAFNADFDGDQMAVHLPLSAEAQAEARILMLSSNNILSPASGKPLAMPRLDMVTGLYFLTTMIEGDKGEYRPAATDQPEEGVYSSPAEAIMAMDRGALSVRAKIKVRLTQLRPPAALEAELFENGWKPGLAWTAETTLGRVMFNELLPISYPFINEQMHKKVQARIINDLAERFPMIVVAQTVDKLKDAGFHWATRSGVTVSMADVLVPPQKQEILDRYEAEADGIERKYQRGALNHKERNDSLVKIWQDATEEVGKALEEHYPADNPIITIVKSGATGNFTQTRTLAGMKGLVTNPKGEFIPRPIKSSFREGLTVLEYFINTHGARKGLADTALRTADSGYLTRRLVDVSQDVIVREHDCETERGINVTLAERQPDGSLIRDPHVETSAFARTLATDAVDADGNVVIERGHDLGDPAIDKLLAAGIDHVKVRSVLTCASATGVCAMCYGRSMATGKLVDIGEAVGIVAAQSIGEPGTQLTMRTFHQGGVGEDITGGLPRVQELFEARVPRNKAPIADVSGRVQLEEGERFYKITIVPDDGGEEVVYDKLSKRQRLRVIKHEDGSEGVLSDGDHVEVGDQLMEGSADPHEVLRVQGPREVQIHLVHEVQEVYRAQGVSIHDKHIEVIVRQMLRRVTIIDSGATEFLPGSLTERAEFESENRRVVAEGGEPAAGRPVLMGITKASLATDSWLSAASFQETTRVLTDAAINCRSDKLQGLKENVIIGKLIPAGTGINRYRNIQVQPTEEARAAAYTIPSYEDQYYSPDFGQATGAAVPLDDYGYSDYR</sequence>
<organism>
    <name type="scientific">Mycobacterium sp. (strain JLS)</name>
    <dbReference type="NCBI Taxonomy" id="164757"/>
    <lineage>
        <taxon>Bacteria</taxon>
        <taxon>Bacillati</taxon>
        <taxon>Actinomycetota</taxon>
        <taxon>Actinomycetes</taxon>
        <taxon>Mycobacteriales</taxon>
        <taxon>Mycobacteriaceae</taxon>
        <taxon>Mycobacterium</taxon>
    </lineage>
</organism>
<proteinExistence type="inferred from homology"/>
<comment type="function">
    <text evidence="1">DNA-dependent RNA polymerase catalyzes the transcription of DNA into RNA using the four ribonucleoside triphosphates as substrates.</text>
</comment>
<comment type="catalytic activity">
    <reaction evidence="1">
        <text>RNA(n) + a ribonucleoside 5'-triphosphate = RNA(n+1) + diphosphate</text>
        <dbReference type="Rhea" id="RHEA:21248"/>
        <dbReference type="Rhea" id="RHEA-COMP:14527"/>
        <dbReference type="Rhea" id="RHEA-COMP:17342"/>
        <dbReference type="ChEBI" id="CHEBI:33019"/>
        <dbReference type="ChEBI" id="CHEBI:61557"/>
        <dbReference type="ChEBI" id="CHEBI:140395"/>
        <dbReference type="EC" id="2.7.7.6"/>
    </reaction>
</comment>
<comment type="cofactor">
    <cofactor evidence="1">
        <name>Mg(2+)</name>
        <dbReference type="ChEBI" id="CHEBI:18420"/>
    </cofactor>
    <text evidence="1">Binds 1 Mg(2+) ion per subunit.</text>
</comment>
<comment type="cofactor">
    <cofactor evidence="1">
        <name>Zn(2+)</name>
        <dbReference type="ChEBI" id="CHEBI:29105"/>
    </cofactor>
    <text evidence="1">Binds 2 Zn(2+) ions per subunit.</text>
</comment>
<comment type="subunit">
    <text evidence="1">The RNAP catalytic core consists of 2 alpha, 1 beta, 1 beta' and 1 omega subunit. When a sigma factor is associated with the core the holoenzyme is formed, which can initiate transcription.</text>
</comment>
<comment type="similarity">
    <text evidence="1">Belongs to the RNA polymerase beta' chain family.</text>
</comment>
<reference key="1">
    <citation type="submission" date="2007-02" db="EMBL/GenBank/DDBJ databases">
        <title>Complete sequence of Mycobacterium sp. JLS.</title>
        <authorList>
            <consortium name="US DOE Joint Genome Institute"/>
            <person name="Copeland A."/>
            <person name="Lucas S."/>
            <person name="Lapidus A."/>
            <person name="Barry K."/>
            <person name="Detter J.C."/>
            <person name="Glavina del Rio T."/>
            <person name="Hammon N."/>
            <person name="Israni S."/>
            <person name="Dalin E."/>
            <person name="Tice H."/>
            <person name="Pitluck S."/>
            <person name="Chain P."/>
            <person name="Malfatti S."/>
            <person name="Shin M."/>
            <person name="Vergez L."/>
            <person name="Schmutz J."/>
            <person name="Larimer F."/>
            <person name="Land M."/>
            <person name="Hauser L."/>
            <person name="Kyrpides N."/>
            <person name="Mikhailova N."/>
            <person name="Miller C.D."/>
            <person name="Anderson A.J."/>
            <person name="Sims R.C."/>
            <person name="Richardson P."/>
        </authorList>
    </citation>
    <scope>NUCLEOTIDE SEQUENCE [LARGE SCALE GENOMIC DNA]</scope>
    <source>
        <strain>JLS</strain>
    </source>
</reference>
<accession>A3PV79</accession>